<protein>
    <recommendedName>
        <fullName evidence="1">Oligoribonuclease</fullName>
        <ecNumber evidence="1">3.1.15.-</ecNumber>
    </recommendedName>
</protein>
<feature type="chain" id="PRO_0000111032" description="Oligoribonuclease">
    <location>
        <begin position="1"/>
        <end position="183"/>
    </location>
</feature>
<feature type="domain" description="Exonuclease" evidence="1">
    <location>
        <begin position="8"/>
        <end position="171"/>
    </location>
</feature>
<feature type="active site" evidence="1">
    <location>
        <position position="129"/>
    </location>
</feature>
<feature type="strand" evidence="2">
    <location>
        <begin position="8"/>
        <end position="18"/>
    </location>
</feature>
<feature type="turn" evidence="2">
    <location>
        <begin position="20"/>
        <end position="22"/>
    </location>
</feature>
<feature type="strand" evidence="2">
    <location>
        <begin position="25"/>
        <end position="33"/>
    </location>
</feature>
<feature type="strand" evidence="2">
    <location>
        <begin position="39"/>
        <end position="42"/>
    </location>
</feature>
<feature type="helix" evidence="2">
    <location>
        <begin position="52"/>
        <end position="55"/>
    </location>
</feature>
<feature type="helix" evidence="2">
    <location>
        <begin position="60"/>
        <end position="68"/>
    </location>
</feature>
<feature type="helix" evidence="2">
    <location>
        <begin position="71"/>
        <end position="76"/>
    </location>
</feature>
<feature type="helix" evidence="2">
    <location>
        <begin position="82"/>
        <end position="93"/>
    </location>
</feature>
<feature type="turn" evidence="2">
    <location>
        <begin position="94"/>
        <end position="96"/>
    </location>
</feature>
<feature type="strand" evidence="2">
    <location>
        <begin position="104"/>
        <end position="108"/>
    </location>
</feature>
<feature type="helix" evidence="2">
    <location>
        <begin position="110"/>
        <end position="119"/>
    </location>
</feature>
<feature type="helix" evidence="2">
    <location>
        <begin position="121"/>
        <end position="126"/>
    </location>
</feature>
<feature type="strand" evidence="2">
    <location>
        <begin position="131"/>
        <end position="133"/>
    </location>
</feature>
<feature type="helix" evidence="2">
    <location>
        <begin position="134"/>
        <end position="144"/>
    </location>
</feature>
<feature type="helix" evidence="2">
    <location>
        <begin position="146"/>
        <end position="149"/>
    </location>
</feature>
<feature type="helix" evidence="2">
    <location>
        <begin position="160"/>
        <end position="177"/>
    </location>
</feature>
<accession>Q83C93</accession>
<reference key="1">
    <citation type="journal article" date="2003" name="Proc. Natl. Acad. Sci. U.S.A.">
        <title>Complete genome sequence of the Q-fever pathogen, Coxiella burnetii.</title>
        <authorList>
            <person name="Seshadri R."/>
            <person name="Paulsen I.T."/>
            <person name="Eisen J.A."/>
            <person name="Read T.D."/>
            <person name="Nelson K.E."/>
            <person name="Nelson W.C."/>
            <person name="Ward N.L."/>
            <person name="Tettelin H."/>
            <person name="Davidsen T.M."/>
            <person name="Beanan M.J."/>
            <person name="DeBoy R.T."/>
            <person name="Daugherty S.C."/>
            <person name="Brinkac L.M."/>
            <person name="Madupu R."/>
            <person name="Dodson R.J."/>
            <person name="Khouri H.M."/>
            <person name="Lee K.H."/>
            <person name="Carty H.A."/>
            <person name="Scanlan D."/>
            <person name="Heinzen R.A."/>
            <person name="Thompson H.A."/>
            <person name="Samuel J.E."/>
            <person name="Fraser C.M."/>
            <person name="Heidelberg J.F."/>
        </authorList>
    </citation>
    <scope>NUCLEOTIDE SEQUENCE [LARGE SCALE GENOMIC DNA]</scope>
    <source>
        <strain>RSA 493 / Nine Mile phase I</strain>
    </source>
</reference>
<sequence length="183" mass="21012">MDFSDDNLIWLDLEMTGLDPERDRIIEIATIVTNSHLDILAEGPAFAIHQPDKLLTAMDNWNTSHHTASGLLERVKNSSVDEVEAETLTLAFLEKYVSAGKSPLCGNSVCQDRRFLSRYMPRLNQFFHYRHLDVTTLKILAQRWAPQIAAAHIKESQHLALQDIRDSIEELRYYRAHLLNLSK</sequence>
<gene>
    <name evidence="1" type="primary">orn</name>
    <name type="ordered locus">CBU_1235</name>
</gene>
<keyword id="KW-0002">3D-structure</keyword>
<keyword id="KW-0963">Cytoplasm</keyword>
<keyword id="KW-0269">Exonuclease</keyword>
<keyword id="KW-0378">Hydrolase</keyword>
<keyword id="KW-0540">Nuclease</keyword>
<keyword id="KW-1185">Reference proteome</keyword>
<organism>
    <name type="scientific">Coxiella burnetii (strain RSA 493 / Nine Mile phase I)</name>
    <dbReference type="NCBI Taxonomy" id="227377"/>
    <lineage>
        <taxon>Bacteria</taxon>
        <taxon>Pseudomonadati</taxon>
        <taxon>Pseudomonadota</taxon>
        <taxon>Gammaproteobacteria</taxon>
        <taxon>Legionellales</taxon>
        <taxon>Coxiellaceae</taxon>
        <taxon>Coxiella</taxon>
    </lineage>
</organism>
<evidence type="ECO:0000255" key="1">
    <source>
        <dbReference type="HAMAP-Rule" id="MF_00045"/>
    </source>
</evidence>
<evidence type="ECO:0007829" key="2">
    <source>
        <dbReference type="PDB" id="3TR8"/>
    </source>
</evidence>
<dbReference type="EC" id="3.1.15.-" evidence="1"/>
<dbReference type="EMBL" id="AE016828">
    <property type="protein sequence ID" value="AAO90744.1"/>
    <property type="molecule type" value="Genomic_DNA"/>
</dbReference>
<dbReference type="RefSeq" id="NP_820230.1">
    <property type="nucleotide sequence ID" value="NC_002971.4"/>
</dbReference>
<dbReference type="RefSeq" id="WP_005770781.1">
    <property type="nucleotide sequence ID" value="NZ_CDBG01000001.1"/>
</dbReference>
<dbReference type="PDB" id="3TR8">
    <property type="method" value="X-ray"/>
    <property type="resolution" value="2.50 A"/>
    <property type="chains" value="A/B=1-183"/>
</dbReference>
<dbReference type="PDBsum" id="3TR8"/>
<dbReference type="SMR" id="Q83C93"/>
<dbReference type="STRING" id="227377.CBU_1235"/>
<dbReference type="DNASU" id="1209140"/>
<dbReference type="EnsemblBacteria" id="AAO90744">
    <property type="protein sequence ID" value="AAO90744"/>
    <property type="gene ID" value="CBU_1235"/>
</dbReference>
<dbReference type="GeneID" id="1209140"/>
<dbReference type="KEGG" id="cbu:CBU_1235"/>
<dbReference type="PATRIC" id="fig|227377.7.peg.1227"/>
<dbReference type="eggNOG" id="COG1949">
    <property type="taxonomic scope" value="Bacteria"/>
</dbReference>
<dbReference type="HOGENOM" id="CLU_064761_2_0_6"/>
<dbReference type="OrthoDB" id="9801329at2"/>
<dbReference type="EvolutionaryTrace" id="Q83C93"/>
<dbReference type="Proteomes" id="UP000002671">
    <property type="component" value="Chromosome"/>
</dbReference>
<dbReference type="GO" id="GO:0005737">
    <property type="term" value="C:cytoplasm"/>
    <property type="evidence" value="ECO:0007669"/>
    <property type="project" value="UniProtKB-SubCell"/>
</dbReference>
<dbReference type="GO" id="GO:0000175">
    <property type="term" value="F:3'-5'-RNA exonuclease activity"/>
    <property type="evidence" value="ECO:0007669"/>
    <property type="project" value="InterPro"/>
</dbReference>
<dbReference type="GO" id="GO:0003676">
    <property type="term" value="F:nucleic acid binding"/>
    <property type="evidence" value="ECO:0007669"/>
    <property type="project" value="InterPro"/>
</dbReference>
<dbReference type="GO" id="GO:0006259">
    <property type="term" value="P:DNA metabolic process"/>
    <property type="evidence" value="ECO:0007669"/>
    <property type="project" value="UniProtKB-ARBA"/>
</dbReference>
<dbReference type="CDD" id="cd06135">
    <property type="entry name" value="Orn"/>
    <property type="match status" value="1"/>
</dbReference>
<dbReference type="FunFam" id="3.30.420.10:FF:000003">
    <property type="entry name" value="Oligoribonuclease"/>
    <property type="match status" value="1"/>
</dbReference>
<dbReference type="Gene3D" id="3.30.420.10">
    <property type="entry name" value="Ribonuclease H-like superfamily/Ribonuclease H"/>
    <property type="match status" value="1"/>
</dbReference>
<dbReference type="HAMAP" id="MF_00045">
    <property type="entry name" value="Oligoribonuclease"/>
    <property type="match status" value="1"/>
</dbReference>
<dbReference type="InterPro" id="IPR013520">
    <property type="entry name" value="Exonuclease_RNaseT/DNA_pol3"/>
</dbReference>
<dbReference type="InterPro" id="IPR022894">
    <property type="entry name" value="Oligoribonuclease"/>
</dbReference>
<dbReference type="InterPro" id="IPR012337">
    <property type="entry name" value="RNaseH-like_sf"/>
</dbReference>
<dbReference type="InterPro" id="IPR036397">
    <property type="entry name" value="RNaseH_sf"/>
</dbReference>
<dbReference type="NCBIfam" id="NF003765">
    <property type="entry name" value="PRK05359.1"/>
    <property type="match status" value="1"/>
</dbReference>
<dbReference type="PANTHER" id="PTHR11046">
    <property type="entry name" value="OLIGORIBONUCLEASE, MITOCHONDRIAL"/>
    <property type="match status" value="1"/>
</dbReference>
<dbReference type="PANTHER" id="PTHR11046:SF0">
    <property type="entry name" value="OLIGORIBONUCLEASE, MITOCHONDRIAL"/>
    <property type="match status" value="1"/>
</dbReference>
<dbReference type="Pfam" id="PF00929">
    <property type="entry name" value="RNase_T"/>
    <property type="match status" value="1"/>
</dbReference>
<dbReference type="SMART" id="SM00479">
    <property type="entry name" value="EXOIII"/>
    <property type="match status" value="1"/>
</dbReference>
<dbReference type="SUPFAM" id="SSF53098">
    <property type="entry name" value="Ribonuclease H-like"/>
    <property type="match status" value="1"/>
</dbReference>
<name>ORN_COXBU</name>
<comment type="function">
    <text evidence="1">3'-to-5' exoribonuclease specific for small oligoribonucleotides.</text>
</comment>
<comment type="subcellular location">
    <subcellularLocation>
        <location evidence="1">Cytoplasm</location>
    </subcellularLocation>
</comment>
<comment type="similarity">
    <text evidence="1">Belongs to the oligoribonuclease family.</text>
</comment>
<proteinExistence type="evidence at protein level"/>